<gene>
    <name type="primary">MRPL27</name>
</gene>
<comment type="subunit">
    <text evidence="1">Component of the mitochondrial ribosome large subunit (39S) which comprises a 16S rRNA and about 50 distinct proteins.</text>
</comment>
<comment type="subcellular location">
    <subcellularLocation>
        <location evidence="1 2">Mitochondrion</location>
    </subcellularLocation>
</comment>
<comment type="similarity">
    <text evidence="3">Belongs to the bacterial ribosomal protein bL27 family.</text>
</comment>
<reference key="1">
    <citation type="submission" date="2005-10" db="EMBL/GenBank/DDBJ databases">
        <authorList>
            <consortium name="NIH - Mammalian Gene Collection (MGC) project"/>
        </authorList>
    </citation>
    <scope>NUCLEOTIDE SEQUENCE [LARGE SCALE MRNA]</scope>
    <source>
        <strain>Crossbred X Angus</strain>
        <tissue>Liver</tissue>
    </source>
</reference>
<reference key="2">
    <citation type="journal article" date="2001" name="J. Biol. Chem.">
        <title>Structural compensation for the deficit of rRNA with proteins in the mammalian mitochondrial ribosome. Systematic analysis of protein components of the large ribosomal subunit from mammalian mitochondria.</title>
        <authorList>
            <person name="Suzuki T."/>
            <person name="Terasaki M."/>
            <person name="Takemoto-Hori C."/>
            <person name="Hanada T."/>
            <person name="Ueda T."/>
            <person name="Wada A."/>
            <person name="Watanabe K."/>
        </authorList>
    </citation>
    <scope>PROTEIN SEQUENCE OF 31-36</scope>
    <scope>IDENTIFICATION BY MASS SPECTROMETRY</scope>
    <scope>SUBCELLULAR LOCATION</scope>
    <scope>SUBUNIT</scope>
</reference>
<reference key="3">
    <citation type="journal article" date="2006" name="J. Mol. Biol.">
        <title>A structural model for the large subunit of the mammalian mitochondrial ribosome.</title>
        <authorList>
            <person name="Mears J.A."/>
            <person name="Sharma M.R."/>
            <person name="Gutell R.R."/>
            <person name="McCook A.S."/>
            <person name="Richardson P.E."/>
            <person name="Caulfield T.R."/>
            <person name="Agrawal R.K."/>
            <person name="Harvey S.C."/>
        </authorList>
    </citation>
    <scope>STRUCTURE BY ELECTRON MICROSCOPY (12 ANGSTROMS)</scope>
    <scope>SUBCELLULAR LOCATION</scope>
</reference>
<protein>
    <recommendedName>
        <fullName evidence="3">Large ribosomal subunit protein bL27m</fullName>
    </recommendedName>
    <alternativeName>
        <fullName>39S ribosomal protein L27, mitochondrial</fullName>
        <shortName>L27mt</shortName>
        <shortName>MRP-L27</shortName>
    </alternativeName>
</protein>
<keyword id="KW-0002">3D-structure</keyword>
<keyword id="KW-0903">Direct protein sequencing</keyword>
<keyword id="KW-0496">Mitochondrion</keyword>
<keyword id="KW-1185">Reference proteome</keyword>
<keyword id="KW-0687">Ribonucleoprotein</keyword>
<keyword id="KW-0689">Ribosomal protein</keyword>
<keyword id="KW-0809">Transit peptide</keyword>
<name>RM27_BOVIN</name>
<proteinExistence type="evidence at protein level"/>
<dbReference type="EMBL" id="BC108174">
    <property type="protein sequence ID" value="AAI08175.1"/>
    <property type="molecule type" value="mRNA"/>
</dbReference>
<dbReference type="RefSeq" id="NP_001032530.1">
    <property type="nucleotide sequence ID" value="NM_001037453.2"/>
</dbReference>
<dbReference type="PDB" id="2FTC">
    <property type="method" value="EM"/>
    <property type="chains" value="O=31-99"/>
</dbReference>
<dbReference type="PDBsum" id="2FTC"/>
<dbReference type="SMR" id="Q32PC3"/>
<dbReference type="FunCoup" id="Q32PC3">
    <property type="interactions" value="908"/>
</dbReference>
<dbReference type="STRING" id="9913.ENSBTAP00000028954"/>
<dbReference type="iPTMnet" id="Q32PC3"/>
<dbReference type="PaxDb" id="9913-ENSBTAP00000028954"/>
<dbReference type="GeneID" id="510058"/>
<dbReference type="KEGG" id="bta:510058"/>
<dbReference type="CTD" id="51264"/>
<dbReference type="eggNOG" id="KOG4600">
    <property type="taxonomic scope" value="Eukaryota"/>
</dbReference>
<dbReference type="HOGENOM" id="CLU_143748_0_0_1"/>
<dbReference type="InParanoid" id="Q32PC3"/>
<dbReference type="OrthoDB" id="1867012at2759"/>
<dbReference type="TreeFam" id="TF323523"/>
<dbReference type="EvolutionaryTrace" id="Q32PC3"/>
<dbReference type="Proteomes" id="UP000009136">
    <property type="component" value="Unplaced"/>
</dbReference>
<dbReference type="GO" id="GO:0005743">
    <property type="term" value="C:mitochondrial inner membrane"/>
    <property type="evidence" value="ECO:0000304"/>
    <property type="project" value="Reactome"/>
</dbReference>
<dbReference type="GO" id="GO:0005762">
    <property type="term" value="C:mitochondrial large ribosomal subunit"/>
    <property type="evidence" value="ECO:0000250"/>
    <property type="project" value="UniProtKB"/>
</dbReference>
<dbReference type="GO" id="GO:0003735">
    <property type="term" value="F:structural constituent of ribosome"/>
    <property type="evidence" value="ECO:0000318"/>
    <property type="project" value="GO_Central"/>
</dbReference>
<dbReference type="GO" id="GO:0006412">
    <property type="term" value="P:translation"/>
    <property type="evidence" value="ECO:0007669"/>
    <property type="project" value="InterPro"/>
</dbReference>
<dbReference type="FunFam" id="2.40.50.100:FF:000031">
    <property type="entry name" value="39S ribosomal protein L27, mitochondrial"/>
    <property type="match status" value="1"/>
</dbReference>
<dbReference type="Gene3D" id="2.40.50.100">
    <property type="match status" value="1"/>
</dbReference>
<dbReference type="InterPro" id="IPR001684">
    <property type="entry name" value="Ribosomal_bL27"/>
</dbReference>
<dbReference type="PANTHER" id="PTHR15893:SF0">
    <property type="entry name" value="LARGE RIBOSOMAL SUBUNIT PROTEIN BL27M"/>
    <property type="match status" value="1"/>
</dbReference>
<dbReference type="PANTHER" id="PTHR15893">
    <property type="entry name" value="RIBOSOMAL PROTEIN L27"/>
    <property type="match status" value="1"/>
</dbReference>
<dbReference type="Pfam" id="PF01016">
    <property type="entry name" value="Ribosomal_L27"/>
    <property type="match status" value="1"/>
</dbReference>
<dbReference type="PRINTS" id="PR00063">
    <property type="entry name" value="RIBOSOMALL27"/>
</dbReference>
<dbReference type="SUPFAM" id="SSF110324">
    <property type="entry name" value="Ribosomal L27 protein-like"/>
    <property type="match status" value="1"/>
</dbReference>
<accession>Q32PC3</accession>
<evidence type="ECO:0000269" key="1">
    <source>
    </source>
</evidence>
<evidence type="ECO:0000269" key="2">
    <source>
    </source>
</evidence>
<evidence type="ECO:0000305" key="3"/>
<organism>
    <name type="scientific">Bos taurus</name>
    <name type="common">Bovine</name>
    <dbReference type="NCBI Taxonomy" id="9913"/>
    <lineage>
        <taxon>Eukaryota</taxon>
        <taxon>Metazoa</taxon>
        <taxon>Chordata</taxon>
        <taxon>Craniata</taxon>
        <taxon>Vertebrata</taxon>
        <taxon>Euteleostomi</taxon>
        <taxon>Mammalia</taxon>
        <taxon>Eutheria</taxon>
        <taxon>Laurasiatheria</taxon>
        <taxon>Artiodactyla</taxon>
        <taxon>Ruminantia</taxon>
        <taxon>Pecora</taxon>
        <taxon>Bovidae</taxon>
        <taxon>Bovinae</taxon>
        <taxon>Bos</taxon>
    </lineage>
</organism>
<sequence>MALAVLAWRTRTAVIALLSPPQAAALAVRYASKKTGGSSKNLGGKSPGKRFGIRKMEGHYVHAGNILATQRHFRWHPGAHVGLGKNKCLYALEEGVVRYTKEVYVPSPSNSEAVDLVTRLPEGAVLYKTFVHVVPAKPEGTFKLVAML</sequence>
<feature type="transit peptide" description="Mitochondrion" evidence="1">
    <location>
        <begin position="1"/>
        <end position="30"/>
    </location>
</feature>
<feature type="chain" id="PRO_0000240146" description="Large ribosomal subunit protein bL27m">
    <location>
        <begin position="31"/>
        <end position="148"/>
    </location>
</feature>